<feature type="chain" id="PRO_1000100759" description="Probable nicotinate-nucleotide adenylyltransferase">
    <location>
        <begin position="1"/>
        <end position="187"/>
    </location>
</feature>
<evidence type="ECO:0000255" key="1">
    <source>
        <dbReference type="HAMAP-Rule" id="MF_00244"/>
    </source>
</evidence>
<reference key="1">
    <citation type="submission" date="2008-08" db="EMBL/GenBank/DDBJ databases">
        <title>Complete sequence of Anaeromyxobacter sp. K.</title>
        <authorList>
            <consortium name="US DOE Joint Genome Institute"/>
            <person name="Lucas S."/>
            <person name="Copeland A."/>
            <person name="Lapidus A."/>
            <person name="Glavina del Rio T."/>
            <person name="Dalin E."/>
            <person name="Tice H."/>
            <person name="Bruce D."/>
            <person name="Goodwin L."/>
            <person name="Pitluck S."/>
            <person name="Saunders E."/>
            <person name="Brettin T."/>
            <person name="Detter J.C."/>
            <person name="Han C."/>
            <person name="Larimer F."/>
            <person name="Land M."/>
            <person name="Hauser L."/>
            <person name="Kyrpides N."/>
            <person name="Ovchinnikiva G."/>
            <person name="Beliaev A."/>
        </authorList>
    </citation>
    <scope>NUCLEOTIDE SEQUENCE [LARGE SCALE GENOMIC DNA]</scope>
    <source>
        <strain>K</strain>
    </source>
</reference>
<organism>
    <name type="scientific">Anaeromyxobacter sp. (strain K)</name>
    <dbReference type="NCBI Taxonomy" id="447217"/>
    <lineage>
        <taxon>Bacteria</taxon>
        <taxon>Pseudomonadati</taxon>
        <taxon>Myxococcota</taxon>
        <taxon>Myxococcia</taxon>
        <taxon>Myxococcales</taxon>
        <taxon>Cystobacterineae</taxon>
        <taxon>Anaeromyxobacteraceae</taxon>
        <taxon>Anaeromyxobacter</taxon>
    </lineage>
</organism>
<keyword id="KW-0067">ATP-binding</keyword>
<keyword id="KW-0520">NAD</keyword>
<keyword id="KW-0547">Nucleotide-binding</keyword>
<keyword id="KW-0548">Nucleotidyltransferase</keyword>
<keyword id="KW-0662">Pyridine nucleotide biosynthesis</keyword>
<keyword id="KW-0808">Transferase</keyword>
<proteinExistence type="inferred from homology"/>
<name>NADD_ANASK</name>
<comment type="function">
    <text evidence="1">Catalyzes the reversible adenylation of nicotinate mononucleotide (NaMN) to nicotinic acid adenine dinucleotide (NaAD).</text>
</comment>
<comment type="catalytic activity">
    <reaction evidence="1">
        <text>nicotinate beta-D-ribonucleotide + ATP + H(+) = deamido-NAD(+) + diphosphate</text>
        <dbReference type="Rhea" id="RHEA:22860"/>
        <dbReference type="ChEBI" id="CHEBI:15378"/>
        <dbReference type="ChEBI" id="CHEBI:30616"/>
        <dbReference type="ChEBI" id="CHEBI:33019"/>
        <dbReference type="ChEBI" id="CHEBI:57502"/>
        <dbReference type="ChEBI" id="CHEBI:58437"/>
        <dbReference type="EC" id="2.7.7.18"/>
    </reaction>
</comment>
<comment type="pathway">
    <text evidence="1">Cofactor biosynthesis; NAD(+) biosynthesis; deamido-NAD(+) from nicotinate D-ribonucleotide: step 1/1.</text>
</comment>
<comment type="similarity">
    <text evidence="1">Belongs to the NadD family.</text>
</comment>
<gene>
    <name evidence="1" type="primary">nadD</name>
    <name type="ordered locus">AnaeK_1454</name>
</gene>
<sequence length="187" mass="20498">MSGGREIALLGGSFNPPHVAHLMAAWWALATQGVSEVWLLPTFRHPFGKDLAPFEDRLEMCRLAARALRGVHVCGAEAELAADPLVGKTARTLEHLAAKHPDHRFALIVGADILAETAKWYRWDRVQALARVIVVGRQGHPPVPGAPDLPAISSTEIRARLARGEDVRGLVPEKVLRYVEEKGLYRG</sequence>
<dbReference type="EC" id="2.7.7.18" evidence="1"/>
<dbReference type="EMBL" id="CP001131">
    <property type="protein sequence ID" value="ACG72685.1"/>
    <property type="molecule type" value="Genomic_DNA"/>
</dbReference>
<dbReference type="RefSeq" id="WP_012525505.1">
    <property type="nucleotide sequence ID" value="NC_011145.1"/>
</dbReference>
<dbReference type="SMR" id="B4UJX6"/>
<dbReference type="KEGG" id="ank:AnaeK_1454"/>
<dbReference type="HOGENOM" id="CLU_069765_3_1_7"/>
<dbReference type="OrthoDB" id="5295945at2"/>
<dbReference type="UniPathway" id="UPA00253">
    <property type="reaction ID" value="UER00332"/>
</dbReference>
<dbReference type="Proteomes" id="UP000001871">
    <property type="component" value="Chromosome"/>
</dbReference>
<dbReference type="GO" id="GO:0005524">
    <property type="term" value="F:ATP binding"/>
    <property type="evidence" value="ECO:0007669"/>
    <property type="project" value="UniProtKB-KW"/>
</dbReference>
<dbReference type="GO" id="GO:0004515">
    <property type="term" value="F:nicotinate-nucleotide adenylyltransferase activity"/>
    <property type="evidence" value="ECO:0007669"/>
    <property type="project" value="UniProtKB-UniRule"/>
</dbReference>
<dbReference type="GO" id="GO:0009435">
    <property type="term" value="P:NAD biosynthetic process"/>
    <property type="evidence" value="ECO:0007669"/>
    <property type="project" value="UniProtKB-UniRule"/>
</dbReference>
<dbReference type="CDD" id="cd02165">
    <property type="entry name" value="NMNAT"/>
    <property type="match status" value="1"/>
</dbReference>
<dbReference type="Gene3D" id="3.40.50.620">
    <property type="entry name" value="HUPs"/>
    <property type="match status" value="1"/>
</dbReference>
<dbReference type="HAMAP" id="MF_00244">
    <property type="entry name" value="NaMN_adenylyltr"/>
    <property type="match status" value="1"/>
</dbReference>
<dbReference type="InterPro" id="IPR004821">
    <property type="entry name" value="Cyt_trans-like"/>
</dbReference>
<dbReference type="InterPro" id="IPR005248">
    <property type="entry name" value="NadD/NMNAT"/>
</dbReference>
<dbReference type="InterPro" id="IPR014729">
    <property type="entry name" value="Rossmann-like_a/b/a_fold"/>
</dbReference>
<dbReference type="NCBIfam" id="TIGR00482">
    <property type="entry name" value="nicotinate (nicotinamide) nucleotide adenylyltransferase"/>
    <property type="match status" value="1"/>
</dbReference>
<dbReference type="PANTHER" id="PTHR39321">
    <property type="entry name" value="NICOTINATE-NUCLEOTIDE ADENYLYLTRANSFERASE-RELATED"/>
    <property type="match status" value="1"/>
</dbReference>
<dbReference type="PANTHER" id="PTHR39321:SF3">
    <property type="entry name" value="PHOSPHOPANTETHEINE ADENYLYLTRANSFERASE"/>
    <property type="match status" value="1"/>
</dbReference>
<dbReference type="Pfam" id="PF01467">
    <property type="entry name" value="CTP_transf_like"/>
    <property type="match status" value="1"/>
</dbReference>
<dbReference type="SUPFAM" id="SSF52374">
    <property type="entry name" value="Nucleotidylyl transferase"/>
    <property type="match status" value="1"/>
</dbReference>
<accession>B4UJX6</accession>
<protein>
    <recommendedName>
        <fullName evidence="1">Probable nicotinate-nucleotide adenylyltransferase</fullName>
        <ecNumber evidence="1">2.7.7.18</ecNumber>
    </recommendedName>
    <alternativeName>
        <fullName evidence="1">Deamido-NAD(+) diphosphorylase</fullName>
    </alternativeName>
    <alternativeName>
        <fullName evidence="1">Deamido-NAD(+) pyrophosphorylase</fullName>
    </alternativeName>
    <alternativeName>
        <fullName evidence="1">Nicotinate mononucleotide adenylyltransferase</fullName>
        <shortName evidence="1">NaMN adenylyltransferase</shortName>
    </alternativeName>
</protein>